<accession>A8A322</accession>
<keyword id="KW-0997">Cell inner membrane</keyword>
<keyword id="KW-1003">Cell membrane</keyword>
<keyword id="KW-0133">Cell shape</keyword>
<keyword id="KW-0238">DNA-binding</keyword>
<keyword id="KW-0472">Membrane</keyword>
<keyword id="KW-0735">Signal-anchor</keyword>
<keyword id="KW-0812">Transmembrane</keyword>
<keyword id="KW-1133">Transmembrane helix</keyword>
<dbReference type="EMBL" id="CP000802">
    <property type="protein sequence ID" value="ABV06926.1"/>
    <property type="molecule type" value="Genomic_DNA"/>
</dbReference>
<dbReference type="RefSeq" id="WP_001090844.1">
    <property type="nucleotide sequence ID" value="NC_009800.1"/>
</dbReference>
<dbReference type="SMR" id="A8A322"/>
<dbReference type="GeneID" id="75172624"/>
<dbReference type="KEGG" id="ecx:EcHS_A2667"/>
<dbReference type="HOGENOM" id="CLU_047530_3_1_6"/>
<dbReference type="GO" id="GO:0005886">
    <property type="term" value="C:plasma membrane"/>
    <property type="evidence" value="ECO:0007669"/>
    <property type="project" value="UniProtKB-SubCell"/>
</dbReference>
<dbReference type="GO" id="GO:0003677">
    <property type="term" value="F:DNA binding"/>
    <property type="evidence" value="ECO:0007669"/>
    <property type="project" value="UniProtKB-KW"/>
</dbReference>
<dbReference type="GO" id="GO:0008360">
    <property type="term" value="P:regulation of cell shape"/>
    <property type="evidence" value="ECO:0007669"/>
    <property type="project" value="UniProtKB-UniRule"/>
</dbReference>
<dbReference type="CDD" id="cd00093">
    <property type="entry name" value="HTH_XRE"/>
    <property type="match status" value="1"/>
</dbReference>
<dbReference type="FunFam" id="1.10.260.40:FF:000014">
    <property type="entry name" value="Cytoskeleton protein RodZ"/>
    <property type="match status" value="1"/>
</dbReference>
<dbReference type="Gene3D" id="1.10.260.40">
    <property type="entry name" value="lambda repressor-like DNA-binding domains"/>
    <property type="match status" value="1"/>
</dbReference>
<dbReference type="HAMAP" id="MF_02017">
    <property type="entry name" value="RodZ"/>
    <property type="match status" value="1"/>
</dbReference>
<dbReference type="InterPro" id="IPR050400">
    <property type="entry name" value="Bact_Cytoskel_RodZ"/>
</dbReference>
<dbReference type="InterPro" id="IPR001387">
    <property type="entry name" value="Cro/C1-type_HTH"/>
</dbReference>
<dbReference type="InterPro" id="IPR010982">
    <property type="entry name" value="Lambda_DNA-bd_dom_sf"/>
</dbReference>
<dbReference type="InterPro" id="IPR023690">
    <property type="entry name" value="RodZ"/>
</dbReference>
<dbReference type="InterPro" id="IPR025194">
    <property type="entry name" value="RodZ-like_C"/>
</dbReference>
<dbReference type="NCBIfam" id="NF008109">
    <property type="entry name" value="PRK10856.1"/>
    <property type="match status" value="1"/>
</dbReference>
<dbReference type="PANTHER" id="PTHR34475">
    <property type="match status" value="1"/>
</dbReference>
<dbReference type="PANTHER" id="PTHR34475:SF1">
    <property type="entry name" value="CYTOSKELETON PROTEIN RODZ"/>
    <property type="match status" value="1"/>
</dbReference>
<dbReference type="Pfam" id="PF13413">
    <property type="entry name" value="HTH_25"/>
    <property type="match status" value="1"/>
</dbReference>
<dbReference type="Pfam" id="PF13464">
    <property type="entry name" value="RodZ_C"/>
    <property type="match status" value="1"/>
</dbReference>
<dbReference type="SMART" id="SM00530">
    <property type="entry name" value="HTH_XRE"/>
    <property type="match status" value="1"/>
</dbReference>
<dbReference type="SUPFAM" id="SSF47413">
    <property type="entry name" value="lambda repressor-like DNA-binding domains"/>
    <property type="match status" value="1"/>
</dbReference>
<dbReference type="PROSITE" id="PS50943">
    <property type="entry name" value="HTH_CROC1"/>
    <property type="match status" value="1"/>
</dbReference>
<sequence length="337" mass="36173">MNTEATHDQNEALTTGARLRNAREQLGLSQQAVAERLCLKVSTVRDIEEDKAPADLASTFLRGYIRSYARLVHIPEEELLPGLEKQAPLRAAKVAPMQSFSLGKRRKKRDGWLMTFTWLVLFVVIGLSGAWWWQDHKAQQEEITTMADQSSAELSSNSEQGQSVPLNTSTTTDPATTSTPPASVDTTATNTQTPAVTAPAPAVDPQQNAVVSPSQANVDTAATPAPTAATTPDGAAPLPTDQAGVTTPVADPNALVMNFTADCWLEVTDATGKKLFSGMQRKDGNLNLTGQAPYKLKIGAPAAVQIQYQGKPVDLSRFIRTNQVARLTLNAEQSPAQ</sequence>
<reference key="1">
    <citation type="journal article" date="2008" name="J. Bacteriol.">
        <title>The pangenome structure of Escherichia coli: comparative genomic analysis of E. coli commensal and pathogenic isolates.</title>
        <authorList>
            <person name="Rasko D.A."/>
            <person name="Rosovitz M.J."/>
            <person name="Myers G.S.A."/>
            <person name="Mongodin E.F."/>
            <person name="Fricke W.F."/>
            <person name="Gajer P."/>
            <person name="Crabtree J."/>
            <person name="Sebaihia M."/>
            <person name="Thomson N.R."/>
            <person name="Chaudhuri R."/>
            <person name="Henderson I.R."/>
            <person name="Sperandio V."/>
            <person name="Ravel J."/>
        </authorList>
    </citation>
    <scope>NUCLEOTIDE SEQUENCE [LARGE SCALE GENOMIC DNA]</scope>
    <source>
        <strain>HS</strain>
    </source>
</reference>
<comment type="function">
    <text evidence="1">Cytoskeletal protein that is involved in cell-shape control through regulation of the length of the long axis.</text>
</comment>
<comment type="subcellular location">
    <subcellularLocation>
        <location evidence="1">Cell inner membrane</location>
        <topology evidence="1">Single-pass type II membrane protein</topology>
    </subcellularLocation>
    <text evidence="1">Forms helical filaments along the long axis of the cell.</text>
</comment>
<comment type="domain">
    <text evidence="1">The helix-turn-helix (HTH) motif in the cytoplasmic domain of the N-terminus is involved in the formation of spirals to maintain the rigid rod shape. As this protein is anchored in the cytoplasmic membrane, the HTH motif may contribute to protein-protein interactions to form the RodZ helix, which is localized beneath the cytoplasmic membrane. The C-terminal domain may be critical for determination of the rod shape by probably interacting with enzymes required for synthesis of the peptidoglycan layer, including PBPs in the periplasm.</text>
</comment>
<comment type="similarity">
    <text evidence="1">Belongs to the RodZ family.</text>
</comment>
<proteinExistence type="inferred from homology"/>
<evidence type="ECO:0000255" key="1">
    <source>
        <dbReference type="HAMAP-Rule" id="MF_02017"/>
    </source>
</evidence>
<evidence type="ECO:0000256" key="2">
    <source>
        <dbReference type="SAM" id="MobiDB-lite"/>
    </source>
</evidence>
<organism>
    <name type="scientific">Escherichia coli O9:H4 (strain HS)</name>
    <dbReference type="NCBI Taxonomy" id="331112"/>
    <lineage>
        <taxon>Bacteria</taxon>
        <taxon>Pseudomonadati</taxon>
        <taxon>Pseudomonadota</taxon>
        <taxon>Gammaproteobacteria</taxon>
        <taxon>Enterobacterales</taxon>
        <taxon>Enterobacteriaceae</taxon>
        <taxon>Escherichia</taxon>
    </lineage>
</organism>
<feature type="chain" id="PRO_0000361844" description="Cytoskeleton protein RodZ">
    <location>
        <begin position="1"/>
        <end position="337"/>
    </location>
</feature>
<feature type="topological domain" description="Cytoplasmic" evidence="1">
    <location>
        <begin position="1"/>
        <end position="111"/>
    </location>
</feature>
<feature type="transmembrane region" description="Helical; Signal-anchor for type II membrane protein" evidence="1">
    <location>
        <begin position="112"/>
        <end position="132"/>
    </location>
</feature>
<feature type="topological domain" description="Periplasmic" evidence="1">
    <location>
        <begin position="133"/>
        <end position="337"/>
    </location>
</feature>
<feature type="domain" description="HTH cro/C1-type" evidence="1">
    <location>
        <begin position="19"/>
        <end position="71"/>
    </location>
</feature>
<feature type="DNA-binding region" description="H-T-H motif" evidence="1">
    <location>
        <begin position="30"/>
        <end position="49"/>
    </location>
</feature>
<feature type="region of interest" description="Disordered" evidence="2">
    <location>
        <begin position="145"/>
        <end position="236"/>
    </location>
</feature>
<feature type="compositionally biased region" description="Polar residues" evidence="2">
    <location>
        <begin position="145"/>
        <end position="167"/>
    </location>
</feature>
<feature type="compositionally biased region" description="Low complexity" evidence="2">
    <location>
        <begin position="168"/>
        <end position="207"/>
    </location>
</feature>
<feature type="compositionally biased region" description="Polar residues" evidence="2">
    <location>
        <begin position="208"/>
        <end position="218"/>
    </location>
</feature>
<feature type="compositionally biased region" description="Low complexity" evidence="2">
    <location>
        <begin position="219"/>
        <end position="236"/>
    </location>
</feature>
<name>RODZ_ECOHS</name>
<gene>
    <name evidence="1" type="primary">rodZ</name>
    <name type="ordered locus">EcHS_A2667</name>
</gene>
<protein>
    <recommendedName>
        <fullName evidence="1">Cytoskeleton protein RodZ</fullName>
    </recommendedName>
</protein>